<dbReference type="EC" id="2.4.2.-"/>
<dbReference type="EMBL" id="LT708304">
    <property type="protein sequence ID" value="SIU02453.1"/>
    <property type="molecule type" value="Genomic_DNA"/>
</dbReference>
<dbReference type="RefSeq" id="NP_857461.1">
    <property type="nucleotide sequence ID" value="NC_002945.3"/>
</dbReference>
<dbReference type="RefSeq" id="WP_010950939.1">
    <property type="nucleotide sequence ID" value="NC_002945.4"/>
</dbReference>
<dbReference type="SMR" id="Q7TVN3"/>
<dbReference type="KEGG" id="mbo:BQ2027_MB3824"/>
<dbReference type="PATRIC" id="fig|233413.5.peg.4182"/>
<dbReference type="Proteomes" id="UP000001419">
    <property type="component" value="Chromosome"/>
</dbReference>
<dbReference type="GO" id="GO:0005886">
    <property type="term" value="C:plasma membrane"/>
    <property type="evidence" value="ECO:0007669"/>
    <property type="project" value="UniProtKB-SubCell"/>
</dbReference>
<dbReference type="GO" id="GO:0052636">
    <property type="term" value="F:arabinosyltransferase activity"/>
    <property type="evidence" value="ECO:0007669"/>
    <property type="project" value="InterPro"/>
</dbReference>
<dbReference type="GO" id="GO:0071766">
    <property type="term" value="P:Actinobacterium-type cell wall biogenesis"/>
    <property type="evidence" value="ECO:0007669"/>
    <property type="project" value="InterPro"/>
</dbReference>
<dbReference type="GO" id="GO:0071555">
    <property type="term" value="P:cell wall organization"/>
    <property type="evidence" value="ECO:0007669"/>
    <property type="project" value="UniProtKB-KW"/>
</dbReference>
<dbReference type="FunFam" id="2.60.120.940:FF:000001">
    <property type="entry name" value="Membrane indolylacetylinositol arabinosyltransferase embC"/>
    <property type="match status" value="1"/>
</dbReference>
<dbReference type="FunFam" id="2.60.120.610:FF:000002">
    <property type="entry name" value="Probable arabinosyltransferase B"/>
    <property type="match status" value="1"/>
</dbReference>
<dbReference type="Gene3D" id="3.40.190.160">
    <property type="match status" value="1"/>
</dbReference>
<dbReference type="Gene3D" id="2.60.120.610">
    <property type="entry name" value="arabinofuranosyltransferase like domain"/>
    <property type="match status" value="1"/>
</dbReference>
<dbReference type="Gene3D" id="2.60.120.940">
    <property type="entry name" value="EmbC, C-terminal domain, subdomain 2"/>
    <property type="match status" value="1"/>
</dbReference>
<dbReference type="InterPro" id="IPR032731">
    <property type="entry name" value="Arabino_trans_C"/>
</dbReference>
<dbReference type="InterPro" id="IPR042486">
    <property type="entry name" value="Arabino_trans_C_2"/>
</dbReference>
<dbReference type="InterPro" id="IPR007680">
    <property type="entry name" value="Arabino_trans_central"/>
</dbReference>
<dbReference type="InterPro" id="IPR040920">
    <property type="entry name" value="Arabino_trans_N"/>
</dbReference>
<dbReference type="InterPro" id="IPR027451">
    <property type="entry name" value="EmbABC_dom1"/>
</dbReference>
<dbReference type="Pfam" id="PF14896">
    <property type="entry name" value="Arabino_trans_C"/>
    <property type="match status" value="1"/>
</dbReference>
<dbReference type="Pfam" id="PF17689">
    <property type="entry name" value="Arabino_trans_N"/>
    <property type="match status" value="1"/>
</dbReference>
<dbReference type="Pfam" id="PF04602">
    <property type="entry name" value="Arabinose_trans"/>
    <property type="match status" value="1"/>
</dbReference>
<proteinExistence type="inferred from homology"/>
<keyword id="KW-1003">Cell membrane</keyword>
<keyword id="KW-0961">Cell wall biogenesis/degradation</keyword>
<keyword id="KW-0328">Glycosyltransferase</keyword>
<keyword id="KW-0472">Membrane</keyword>
<keyword id="KW-1185">Reference proteome</keyword>
<keyword id="KW-0808">Transferase</keyword>
<keyword id="KW-0812">Transmembrane</keyword>
<keyword id="KW-1133">Transmembrane helix</keyword>
<reference key="1">
    <citation type="journal article" date="2003" name="Proc. Natl. Acad. Sci. U.S.A.">
        <title>The complete genome sequence of Mycobacterium bovis.</title>
        <authorList>
            <person name="Garnier T."/>
            <person name="Eiglmeier K."/>
            <person name="Camus J.-C."/>
            <person name="Medina N."/>
            <person name="Mansoor H."/>
            <person name="Pryor M."/>
            <person name="Duthoy S."/>
            <person name="Grondin S."/>
            <person name="Lacroix C."/>
            <person name="Monsempe C."/>
            <person name="Simon S."/>
            <person name="Harris B."/>
            <person name="Atkin R."/>
            <person name="Doggett J."/>
            <person name="Mayes R."/>
            <person name="Keating L."/>
            <person name="Wheeler P.R."/>
            <person name="Parkhill J."/>
            <person name="Barrell B.G."/>
            <person name="Cole S.T."/>
            <person name="Gordon S.V."/>
            <person name="Hewinson R.G."/>
        </authorList>
    </citation>
    <scope>NUCLEOTIDE SEQUENCE [LARGE SCALE GENOMIC DNA]</scope>
    <source>
        <strain>ATCC BAA-935 / AF2122/97</strain>
    </source>
</reference>
<reference key="2">
    <citation type="journal article" date="2017" name="Genome Announc.">
        <title>Updated reference genome sequence and annotation of Mycobacterium bovis AF2122/97.</title>
        <authorList>
            <person name="Malone K.M."/>
            <person name="Farrell D."/>
            <person name="Stuber T.P."/>
            <person name="Schubert O.T."/>
            <person name="Aebersold R."/>
            <person name="Robbe-Austerman S."/>
            <person name="Gordon S.V."/>
        </authorList>
    </citation>
    <scope>NUCLEOTIDE SEQUENCE [LARGE SCALE GENOMIC DNA]</scope>
    <scope>GENOME REANNOTATION</scope>
    <source>
        <strain>ATCC BAA-935 / AF2122/97</strain>
    </source>
</reference>
<evidence type="ECO:0000250" key="1"/>
<evidence type="ECO:0000255" key="2"/>
<evidence type="ECO:0000305" key="3"/>
<comment type="function">
    <text evidence="1">Arabinosyl transferase responsible for the polymerization of arabinose into the arabinan of arabinogalactan.</text>
</comment>
<comment type="subcellular location">
    <subcellularLocation>
        <location evidence="3">Cell membrane</location>
        <topology evidence="3">Multi-pass membrane protein</topology>
    </subcellularLocation>
</comment>
<comment type="similarity">
    <text evidence="3">Belongs to the emb family.</text>
</comment>
<gene>
    <name type="primary">embB</name>
    <name type="ordered locus">BQ2027_MB3824</name>
</gene>
<sequence length="1098" mass="117936">MTQCASRRKSTPSRAILGAFASARGTRWVATIAGLIGFVLSVATPLLPVVQTTAMLDWPQRGQLGSVTAPLISLTPVDFTATVPCDVVRAMPPAGGVVLGTAPKQGKDANLQALFVVVSAQRVDVTDRNVVILSVPREQVTSPQCQRIEVTSTHAGTFANFVGLKDPSGAPLRSGFPDPNLRPQIVGVFTDLTGPAPPGLAVSATIDTRFSTRPTTLKLLAIIGAIVATVVALIALWRLDQLDGRGSIAQLLLRPFRPASSPGGMRRLIPASWRTFTLTDAVVIFGFLLWHVIGANSSDDGYILGMARVADHAGYMSNYFRWFGSPEDPFGWYYNLLALMTHVSDASLWMRLPDLAAGLVCWLLLSREVLPRLGPAVAASKPAYWAAAMVLLTAWMPFNNGLRPEGIIALGSLVTYVLIERSMRYSRLTPAALAVVTAAFTLGVQPTGLIAVAALVAGGRPMLRILVRRHRLVGTLPLVSPMLAAGTVILTVVFADQTLSTVLEATRVRAKIGPSQAWYTENLRYYYLILPTVDGSLSRRFGFLITALCLFTAVFIMLRRKRIPSVARGPAWRLMGVIFGTMFFLMFTPTKWVHHFGLFAAVGAAMAALTTVLVSPSVLRWSRNRMAFLAALFFLLALCWATTNGWWYVSSYGVPFNSAMPKIDGITVSTIFFALFAIAAGYAAWLHFAPRGAGEGRLIRALTTAPVPIVAGFMAAVFVASMVAGIVRQYPTYSNGWSNVRAFVGGCGLADDVLVEPDTNAGFMKPLDGDSGSWGPLGPLGGVNPVGFTPNGVPEHTVAEAIVMKPNQPGTDYDWDAPTKLTSPGINGSTVPLPYGLDPARVPLAGTYTTGAQQQSTLVSAWYLLPKPDDGHPLVVVTAAGKIAGNSVLHGYTPGQTVVLEYAMPGPGALVPAGRMVPDDLYGEQPKAWRNLRFARAKMPADAVAVRVVAEDLSLTPEDWIAVTPPRVPDLRSLQEYVGSTQPVLLDWAVGLAFPCQQPMLHANGIAEIPKFRITPDYSAKKLDTDTWEDGTNGGLLGITDLLLRAHVMATYLSRDWARDWGSLRKFDTLVDAPPAQLELGTATRSGLWSPGKIRIGP</sequence>
<accession>Q7TVN3</accession>
<accession>A0A1R3Y5A8</accession>
<accession>X2BQ26</accession>
<organism>
    <name type="scientific">Mycobacterium bovis (strain ATCC BAA-935 / AF2122/97)</name>
    <dbReference type="NCBI Taxonomy" id="233413"/>
    <lineage>
        <taxon>Bacteria</taxon>
        <taxon>Bacillati</taxon>
        <taxon>Actinomycetota</taxon>
        <taxon>Actinomycetes</taxon>
        <taxon>Mycobacteriales</taxon>
        <taxon>Mycobacteriaceae</taxon>
        <taxon>Mycobacterium</taxon>
        <taxon>Mycobacterium tuberculosis complex</taxon>
    </lineage>
</organism>
<protein>
    <recommendedName>
        <fullName>Probable arabinosyltransferase B</fullName>
        <ecNumber>2.4.2.-</ecNumber>
    </recommendedName>
</protein>
<name>EMBB_MYCBO</name>
<feature type="chain" id="PRO_0000220566" description="Probable arabinosyltransferase B">
    <location>
        <begin position="1"/>
        <end position="1098"/>
    </location>
</feature>
<feature type="transmembrane region" description="Helical" evidence="2">
    <location>
        <begin position="28"/>
        <end position="50"/>
    </location>
</feature>
<feature type="transmembrane region" description="Helical" evidence="2">
    <location>
        <begin position="217"/>
        <end position="239"/>
    </location>
</feature>
<feature type="transmembrane region" description="Helical" evidence="2">
    <location>
        <begin position="271"/>
        <end position="293"/>
    </location>
</feature>
<feature type="transmembrane region" description="Helical" evidence="2">
    <location>
        <begin position="402"/>
        <end position="419"/>
    </location>
</feature>
<feature type="transmembrane region" description="Helical" evidence="2">
    <location>
        <begin position="434"/>
        <end position="456"/>
    </location>
</feature>
<feature type="transmembrane region" description="Helical" evidence="2">
    <location>
        <begin position="472"/>
        <end position="494"/>
    </location>
</feature>
<feature type="transmembrane region" description="Helical" evidence="2">
    <location>
        <begin position="541"/>
        <end position="558"/>
    </location>
</feature>
<feature type="transmembrane region" description="Helical" evidence="2">
    <location>
        <begin position="570"/>
        <end position="587"/>
    </location>
</feature>
<feature type="transmembrane region" description="Helical" evidence="2">
    <location>
        <begin position="597"/>
        <end position="619"/>
    </location>
</feature>
<feature type="transmembrane region" description="Helical" evidence="2">
    <location>
        <begin position="626"/>
        <end position="648"/>
    </location>
</feature>
<feature type="transmembrane region" description="Helical" evidence="2">
    <location>
        <begin position="663"/>
        <end position="685"/>
    </location>
</feature>
<feature type="transmembrane region" description="Helical" evidence="2">
    <location>
        <begin position="698"/>
        <end position="720"/>
    </location>
</feature>